<name>FMT_MARN8</name>
<gene>
    <name evidence="1" type="primary">fmt</name>
    <name type="ordered locus">Maqu_0042</name>
</gene>
<feature type="chain" id="PRO_1000203866" description="Methionyl-tRNA formyltransferase">
    <location>
        <begin position="1"/>
        <end position="311"/>
    </location>
</feature>
<feature type="binding site" evidence="1">
    <location>
        <begin position="109"/>
        <end position="112"/>
    </location>
    <ligand>
        <name>(6S)-5,6,7,8-tetrahydrofolate</name>
        <dbReference type="ChEBI" id="CHEBI:57453"/>
    </ligand>
</feature>
<evidence type="ECO:0000255" key="1">
    <source>
        <dbReference type="HAMAP-Rule" id="MF_00182"/>
    </source>
</evidence>
<sequence>MRIVFAGTPDFAATALKTLLNAGYDIVGVYTQPDRPAGRGRKLMPSPVKQVALDTGIPVYQPVSLKPEEAQQELASLQPDVMIVAAYGLILPKAVLNIPTHGCLNIHASLLPRWRGAAPIQRAIAAGDAETGITIMQMDEGLDTGDMLLKLDTPISADDTGGSLHDRLAEMGGKAIVQAMERLAKGDLTGEVQNEAEANYAHKLSKEEGHIDWSRSAQEIERLIRAFNPWPGTFTDLGEQRIRIHQASALKQGSDKGPGTVIARERDGVDVACGTGTLRITSAQLPGSKAQSINDLINGGKQVLLPGQELN</sequence>
<proteinExistence type="inferred from homology"/>
<organism>
    <name type="scientific">Marinobacter nauticus (strain ATCC 700491 / DSM 11845 / VT8)</name>
    <name type="common">Marinobacter aquaeolei</name>
    <dbReference type="NCBI Taxonomy" id="351348"/>
    <lineage>
        <taxon>Bacteria</taxon>
        <taxon>Pseudomonadati</taxon>
        <taxon>Pseudomonadota</taxon>
        <taxon>Gammaproteobacteria</taxon>
        <taxon>Pseudomonadales</taxon>
        <taxon>Marinobacteraceae</taxon>
        <taxon>Marinobacter</taxon>
    </lineage>
</organism>
<protein>
    <recommendedName>
        <fullName evidence="1">Methionyl-tRNA formyltransferase</fullName>
        <ecNumber evidence="1">2.1.2.9</ecNumber>
    </recommendedName>
</protein>
<keyword id="KW-0648">Protein biosynthesis</keyword>
<keyword id="KW-0808">Transferase</keyword>
<dbReference type="EC" id="2.1.2.9" evidence="1"/>
<dbReference type="EMBL" id="CP000514">
    <property type="protein sequence ID" value="ABM17149.1"/>
    <property type="molecule type" value="Genomic_DNA"/>
</dbReference>
<dbReference type="RefSeq" id="WP_011783622.1">
    <property type="nucleotide sequence ID" value="NC_008740.1"/>
</dbReference>
<dbReference type="SMR" id="A1TWN0"/>
<dbReference type="STRING" id="351348.Maqu_0042"/>
<dbReference type="KEGG" id="maq:Maqu_0042"/>
<dbReference type="eggNOG" id="COG0223">
    <property type="taxonomic scope" value="Bacteria"/>
</dbReference>
<dbReference type="HOGENOM" id="CLU_033347_1_2_6"/>
<dbReference type="OrthoDB" id="9802815at2"/>
<dbReference type="Proteomes" id="UP000000998">
    <property type="component" value="Chromosome"/>
</dbReference>
<dbReference type="GO" id="GO:0005829">
    <property type="term" value="C:cytosol"/>
    <property type="evidence" value="ECO:0007669"/>
    <property type="project" value="TreeGrafter"/>
</dbReference>
<dbReference type="GO" id="GO:0004479">
    <property type="term" value="F:methionyl-tRNA formyltransferase activity"/>
    <property type="evidence" value="ECO:0007669"/>
    <property type="project" value="UniProtKB-UniRule"/>
</dbReference>
<dbReference type="CDD" id="cd08646">
    <property type="entry name" value="FMT_core_Met-tRNA-FMT_N"/>
    <property type="match status" value="1"/>
</dbReference>
<dbReference type="CDD" id="cd08704">
    <property type="entry name" value="Met_tRNA_FMT_C"/>
    <property type="match status" value="1"/>
</dbReference>
<dbReference type="FunFam" id="3.40.50.12230:FF:000001">
    <property type="entry name" value="Methionyl-tRNA formyltransferase"/>
    <property type="match status" value="1"/>
</dbReference>
<dbReference type="FunFam" id="3.40.50.170:FF:000003">
    <property type="entry name" value="Methionyl-tRNA formyltransferase"/>
    <property type="match status" value="1"/>
</dbReference>
<dbReference type="Gene3D" id="3.10.25.10">
    <property type="entry name" value="Formyl transferase, C-terminal domain"/>
    <property type="match status" value="1"/>
</dbReference>
<dbReference type="Gene3D" id="3.40.50.170">
    <property type="entry name" value="Formyl transferase, N-terminal domain"/>
    <property type="match status" value="1"/>
</dbReference>
<dbReference type="HAMAP" id="MF_00182">
    <property type="entry name" value="Formyl_trans"/>
    <property type="match status" value="1"/>
</dbReference>
<dbReference type="InterPro" id="IPR005794">
    <property type="entry name" value="Fmt"/>
</dbReference>
<dbReference type="InterPro" id="IPR005793">
    <property type="entry name" value="Formyl_trans_C"/>
</dbReference>
<dbReference type="InterPro" id="IPR037022">
    <property type="entry name" value="Formyl_trans_C_sf"/>
</dbReference>
<dbReference type="InterPro" id="IPR002376">
    <property type="entry name" value="Formyl_transf_N"/>
</dbReference>
<dbReference type="InterPro" id="IPR036477">
    <property type="entry name" value="Formyl_transf_N_sf"/>
</dbReference>
<dbReference type="InterPro" id="IPR011034">
    <property type="entry name" value="Formyl_transferase-like_C_sf"/>
</dbReference>
<dbReference type="InterPro" id="IPR001555">
    <property type="entry name" value="GART_AS"/>
</dbReference>
<dbReference type="InterPro" id="IPR044135">
    <property type="entry name" value="Met-tRNA-FMT_C"/>
</dbReference>
<dbReference type="InterPro" id="IPR041711">
    <property type="entry name" value="Met-tRNA-FMT_N"/>
</dbReference>
<dbReference type="NCBIfam" id="TIGR00460">
    <property type="entry name" value="fmt"/>
    <property type="match status" value="1"/>
</dbReference>
<dbReference type="PANTHER" id="PTHR11138">
    <property type="entry name" value="METHIONYL-TRNA FORMYLTRANSFERASE"/>
    <property type="match status" value="1"/>
</dbReference>
<dbReference type="PANTHER" id="PTHR11138:SF5">
    <property type="entry name" value="METHIONYL-TRNA FORMYLTRANSFERASE, MITOCHONDRIAL"/>
    <property type="match status" value="1"/>
</dbReference>
<dbReference type="Pfam" id="PF02911">
    <property type="entry name" value="Formyl_trans_C"/>
    <property type="match status" value="1"/>
</dbReference>
<dbReference type="Pfam" id="PF00551">
    <property type="entry name" value="Formyl_trans_N"/>
    <property type="match status" value="1"/>
</dbReference>
<dbReference type="SUPFAM" id="SSF50486">
    <property type="entry name" value="FMT C-terminal domain-like"/>
    <property type="match status" value="1"/>
</dbReference>
<dbReference type="SUPFAM" id="SSF53328">
    <property type="entry name" value="Formyltransferase"/>
    <property type="match status" value="1"/>
</dbReference>
<dbReference type="PROSITE" id="PS00373">
    <property type="entry name" value="GART"/>
    <property type="match status" value="1"/>
</dbReference>
<accession>A1TWN0</accession>
<reference key="1">
    <citation type="journal article" date="2011" name="Appl. Environ. Microbiol.">
        <title>Genomic potential of Marinobacter aquaeolei, a biogeochemical 'opportunitroph'.</title>
        <authorList>
            <person name="Singer E."/>
            <person name="Webb E.A."/>
            <person name="Nelson W.C."/>
            <person name="Heidelberg J.F."/>
            <person name="Ivanova N."/>
            <person name="Pati A."/>
            <person name="Edwards K.J."/>
        </authorList>
    </citation>
    <scope>NUCLEOTIDE SEQUENCE [LARGE SCALE GENOMIC DNA]</scope>
    <source>
        <strain>ATCC 700491 / DSM 11845 / VT8</strain>
    </source>
</reference>
<comment type="function">
    <text evidence="1">Attaches a formyl group to the free amino group of methionyl-tRNA(fMet). The formyl group appears to play a dual role in the initiator identity of N-formylmethionyl-tRNA by promoting its recognition by IF2 and preventing the misappropriation of this tRNA by the elongation apparatus.</text>
</comment>
<comment type="catalytic activity">
    <reaction evidence="1">
        <text>L-methionyl-tRNA(fMet) + (6R)-10-formyltetrahydrofolate = N-formyl-L-methionyl-tRNA(fMet) + (6S)-5,6,7,8-tetrahydrofolate + H(+)</text>
        <dbReference type="Rhea" id="RHEA:24380"/>
        <dbReference type="Rhea" id="RHEA-COMP:9952"/>
        <dbReference type="Rhea" id="RHEA-COMP:9953"/>
        <dbReference type="ChEBI" id="CHEBI:15378"/>
        <dbReference type="ChEBI" id="CHEBI:57453"/>
        <dbReference type="ChEBI" id="CHEBI:78530"/>
        <dbReference type="ChEBI" id="CHEBI:78844"/>
        <dbReference type="ChEBI" id="CHEBI:195366"/>
        <dbReference type="EC" id="2.1.2.9"/>
    </reaction>
</comment>
<comment type="similarity">
    <text evidence="1">Belongs to the Fmt family.</text>
</comment>